<dbReference type="EMBL" id="AK002233">
    <property type="protein sequence ID" value="BAC24983.1"/>
    <property type="molecule type" value="mRNA"/>
</dbReference>
<dbReference type="EMBL" id="AK011889">
    <property type="protein sequence ID" value="BAB27898.1"/>
    <property type="molecule type" value="mRNA"/>
</dbReference>
<dbReference type="EMBL" id="AK151522">
    <property type="protein sequence ID" value="BAE30471.1"/>
    <property type="molecule type" value="mRNA"/>
</dbReference>
<dbReference type="EMBL" id="BC018324">
    <property type="protein sequence ID" value="AAH18324.1"/>
    <property type="molecule type" value="mRNA"/>
</dbReference>
<dbReference type="CCDS" id="CCDS15442.1"/>
<dbReference type="RefSeq" id="NP_081706.1">
    <property type="nucleotide sequence ID" value="NM_027430.3"/>
</dbReference>
<dbReference type="SMR" id="Q9D023"/>
<dbReference type="BioGRID" id="214064">
    <property type="interactions" value="36"/>
</dbReference>
<dbReference type="CORUM" id="Q9D023"/>
<dbReference type="FunCoup" id="Q9D023">
    <property type="interactions" value="1311"/>
</dbReference>
<dbReference type="IntAct" id="Q9D023">
    <property type="interactions" value="3"/>
</dbReference>
<dbReference type="MINT" id="Q9D023"/>
<dbReference type="STRING" id="10090.ENSMUSP00000027853"/>
<dbReference type="GuidetoPHARMACOLOGY" id="3023"/>
<dbReference type="GlyGen" id="Q9D023">
    <property type="glycosylation" value="2 sites, 1 N-linked glycan (1 site), 1 O-linked glycan (1 site)"/>
</dbReference>
<dbReference type="iPTMnet" id="Q9D023"/>
<dbReference type="PhosphoSitePlus" id="Q9D023"/>
<dbReference type="SwissPalm" id="Q9D023"/>
<dbReference type="jPOST" id="Q9D023"/>
<dbReference type="PaxDb" id="10090-ENSMUSP00000027853"/>
<dbReference type="PeptideAtlas" id="Q9D023"/>
<dbReference type="ProteomicsDB" id="291485"/>
<dbReference type="Pumba" id="Q9D023"/>
<dbReference type="Antibodypedia" id="34345">
    <property type="antibodies" value="213 antibodies from 26 providers"/>
</dbReference>
<dbReference type="Ensembl" id="ENSMUST00000027853.6">
    <property type="protein sequence ID" value="ENSMUSP00000027853.6"/>
    <property type="gene ID" value="ENSMUSG00000026568.7"/>
</dbReference>
<dbReference type="GeneID" id="70456"/>
<dbReference type="KEGG" id="mmu:70456"/>
<dbReference type="UCSC" id="uc007djd.1">
    <property type="organism name" value="mouse"/>
</dbReference>
<dbReference type="AGR" id="MGI:1917706"/>
<dbReference type="CTD" id="25874"/>
<dbReference type="MGI" id="MGI:1917706">
    <property type="gene designation" value="Mpc2"/>
</dbReference>
<dbReference type="VEuPathDB" id="HostDB:ENSMUSG00000026568"/>
<dbReference type="eggNOG" id="KOG1589">
    <property type="taxonomic scope" value="Eukaryota"/>
</dbReference>
<dbReference type="GeneTree" id="ENSGT00510000047120"/>
<dbReference type="HOGENOM" id="CLU_099502_4_1_1"/>
<dbReference type="InParanoid" id="Q9D023"/>
<dbReference type="OMA" id="PQQFAIC"/>
<dbReference type="OrthoDB" id="2064at9989"/>
<dbReference type="PhylomeDB" id="Q9D023"/>
<dbReference type="TreeFam" id="TF300066"/>
<dbReference type="BioGRID-ORCS" id="70456">
    <property type="hits" value="3 hits in 77 CRISPR screens"/>
</dbReference>
<dbReference type="ChiTaRS" id="Mpc2">
    <property type="organism name" value="mouse"/>
</dbReference>
<dbReference type="PRO" id="PR:Q9D023"/>
<dbReference type="Proteomes" id="UP000000589">
    <property type="component" value="Chromosome 1"/>
</dbReference>
<dbReference type="RNAct" id="Q9D023">
    <property type="molecule type" value="protein"/>
</dbReference>
<dbReference type="Bgee" id="ENSMUSG00000026568">
    <property type="expression patterns" value="Expressed in metanephric proximal tubule and 250 other cell types or tissues"/>
</dbReference>
<dbReference type="ExpressionAtlas" id="Q9D023">
    <property type="expression patterns" value="baseline and differential"/>
</dbReference>
<dbReference type="GO" id="GO:0005743">
    <property type="term" value="C:mitochondrial inner membrane"/>
    <property type="evidence" value="ECO:0000314"/>
    <property type="project" value="MGI"/>
</dbReference>
<dbReference type="GO" id="GO:0005739">
    <property type="term" value="C:mitochondrion"/>
    <property type="evidence" value="ECO:0000314"/>
    <property type="project" value="UniProtKB"/>
</dbReference>
<dbReference type="GO" id="GO:0042802">
    <property type="term" value="F:identical protein binding"/>
    <property type="evidence" value="ECO:0007669"/>
    <property type="project" value="Ensembl"/>
</dbReference>
<dbReference type="GO" id="GO:0050833">
    <property type="term" value="F:pyruvate transmembrane transporter activity"/>
    <property type="evidence" value="ECO:0000314"/>
    <property type="project" value="MGI"/>
</dbReference>
<dbReference type="GO" id="GO:0006850">
    <property type="term" value="P:mitochondrial pyruvate transmembrane transport"/>
    <property type="evidence" value="ECO:0000316"/>
    <property type="project" value="MGI"/>
</dbReference>
<dbReference type="GO" id="GO:0035774">
    <property type="term" value="P:positive regulation of insulin secretion involved in cellular response to glucose stimulus"/>
    <property type="evidence" value="ECO:0000315"/>
    <property type="project" value="MGI"/>
</dbReference>
<dbReference type="GO" id="GO:0006086">
    <property type="term" value="P:pyruvate decarboxylation to acetyl-CoA"/>
    <property type="evidence" value="ECO:0000315"/>
    <property type="project" value="MGI"/>
</dbReference>
<dbReference type="InterPro" id="IPR005336">
    <property type="entry name" value="MPC"/>
</dbReference>
<dbReference type="PANTHER" id="PTHR14154">
    <property type="entry name" value="UPF0041 BRAIN PROTEIN 44-RELATED"/>
    <property type="match status" value="1"/>
</dbReference>
<dbReference type="Pfam" id="PF03650">
    <property type="entry name" value="MPC"/>
    <property type="match status" value="1"/>
</dbReference>
<evidence type="ECO:0000250" key="1">
    <source>
        <dbReference type="UniProtKB" id="O95563"/>
    </source>
</evidence>
<evidence type="ECO:0000255" key="2"/>
<evidence type="ECO:0000269" key="3">
    <source>
    </source>
</evidence>
<evidence type="ECO:0000305" key="4"/>
<evidence type="ECO:0007744" key="5">
    <source>
    </source>
</evidence>
<accession>Q9D023</accession>
<accession>Q3UA44</accession>
<proteinExistence type="evidence at protein level"/>
<organism>
    <name type="scientific">Mus musculus</name>
    <name type="common">Mouse</name>
    <dbReference type="NCBI Taxonomy" id="10090"/>
    <lineage>
        <taxon>Eukaryota</taxon>
        <taxon>Metazoa</taxon>
        <taxon>Chordata</taxon>
        <taxon>Craniata</taxon>
        <taxon>Vertebrata</taxon>
        <taxon>Euteleostomi</taxon>
        <taxon>Mammalia</taxon>
        <taxon>Eutheria</taxon>
        <taxon>Euarchontoglires</taxon>
        <taxon>Glires</taxon>
        <taxon>Rodentia</taxon>
        <taxon>Myomorpha</taxon>
        <taxon>Muroidea</taxon>
        <taxon>Muridae</taxon>
        <taxon>Murinae</taxon>
        <taxon>Mus</taxon>
        <taxon>Mus</taxon>
    </lineage>
</organism>
<keyword id="KW-0007">Acetylation</keyword>
<keyword id="KW-0472">Membrane</keyword>
<keyword id="KW-0496">Mitochondrion</keyword>
<keyword id="KW-0999">Mitochondrion inner membrane</keyword>
<keyword id="KW-1185">Reference proteome</keyword>
<keyword id="KW-0812">Transmembrane</keyword>
<keyword id="KW-1133">Transmembrane helix</keyword>
<keyword id="KW-0813">Transport</keyword>
<feature type="chain" id="PRO_0000212794" description="Mitochondrial pyruvate carrier 2">
    <location>
        <begin position="1"/>
        <end position="127"/>
    </location>
</feature>
<feature type="topological domain" description="Mitochondrial matrix" evidence="1">
    <location>
        <begin position="2"/>
        <end position="40"/>
    </location>
</feature>
<feature type="transmembrane region" description="Helical" evidence="2">
    <location>
        <begin position="41"/>
        <end position="61"/>
    </location>
</feature>
<feature type="topological domain" description="Mitochondrial intermembrane" evidence="1">
    <location>
        <begin position="62"/>
        <end position="72"/>
    </location>
</feature>
<feature type="transmembrane region" description="Helical" evidence="2">
    <location>
        <begin position="73"/>
        <end position="90"/>
    </location>
</feature>
<feature type="topological domain" description="Mitochondrial matrix" evidence="1">
    <location>
        <begin position="91"/>
        <end position="92"/>
    </location>
</feature>
<feature type="transmembrane region" description="Helical" evidence="2">
    <location>
        <begin position="93"/>
        <end position="115"/>
    </location>
</feature>
<feature type="topological domain" description="Mitochondrial intermembrane" evidence="1">
    <location>
        <begin position="116"/>
        <end position="127"/>
    </location>
</feature>
<feature type="modified residue" description="N6-acetyllysine" evidence="5">
    <location>
        <position position="26"/>
    </location>
</feature>
<comment type="function">
    <text evidence="3">Mediates the uptake of pyruvate into mitochondria.</text>
</comment>
<comment type="catalytic activity">
    <reaction evidence="3">
        <text>pyruvate(out) + H(+)(out) = pyruvate(in) + H(+)(in)</text>
        <dbReference type="Rhea" id="RHEA:64720"/>
        <dbReference type="ChEBI" id="CHEBI:15361"/>
        <dbReference type="ChEBI" id="CHEBI:15378"/>
    </reaction>
</comment>
<comment type="subunit">
    <text evidence="1">Homodimer. Homooligomer. Forms heterodimers with MPC1 and MPC1L. The heterodimer is the more stable and dominant form.</text>
</comment>
<comment type="subcellular location">
    <subcellularLocation>
        <location evidence="3">Mitochondrion inner membrane</location>
        <topology evidence="2">Multi-pass membrane protein</topology>
    </subcellularLocation>
</comment>
<comment type="similarity">
    <text evidence="4">Belongs to the mitochondrial pyruvate carrier (MPC) (TC 2.A.105) family.</text>
</comment>
<sequence length="127" mass="14286">MAAAGARGLRATYHRLMDKVELLLPKKLRPLYNHPAGPRTVFFWAPIMKWGLVCAGLADMARPAEKLSTAQSTVLMATGFIWSRYSLVIIPKNWSLFAVNFFVGSAGASQLFRIWRYNQELKSKGIQ</sequence>
<gene>
    <name type="primary">Mpc2</name>
    <name type="synonym">Brp44</name>
</gene>
<reference key="1">
    <citation type="journal article" date="2005" name="Science">
        <title>The transcriptional landscape of the mammalian genome.</title>
        <authorList>
            <person name="Carninci P."/>
            <person name="Kasukawa T."/>
            <person name="Katayama S."/>
            <person name="Gough J."/>
            <person name="Frith M.C."/>
            <person name="Maeda N."/>
            <person name="Oyama R."/>
            <person name="Ravasi T."/>
            <person name="Lenhard B."/>
            <person name="Wells C."/>
            <person name="Kodzius R."/>
            <person name="Shimokawa K."/>
            <person name="Bajic V.B."/>
            <person name="Brenner S.E."/>
            <person name="Batalov S."/>
            <person name="Forrest A.R."/>
            <person name="Zavolan M."/>
            <person name="Davis M.J."/>
            <person name="Wilming L.G."/>
            <person name="Aidinis V."/>
            <person name="Allen J.E."/>
            <person name="Ambesi-Impiombato A."/>
            <person name="Apweiler R."/>
            <person name="Aturaliya R.N."/>
            <person name="Bailey T.L."/>
            <person name="Bansal M."/>
            <person name="Baxter L."/>
            <person name="Beisel K.W."/>
            <person name="Bersano T."/>
            <person name="Bono H."/>
            <person name="Chalk A.M."/>
            <person name="Chiu K.P."/>
            <person name="Choudhary V."/>
            <person name="Christoffels A."/>
            <person name="Clutterbuck D.R."/>
            <person name="Crowe M.L."/>
            <person name="Dalla E."/>
            <person name="Dalrymple B.P."/>
            <person name="de Bono B."/>
            <person name="Della Gatta G."/>
            <person name="di Bernardo D."/>
            <person name="Down T."/>
            <person name="Engstrom P."/>
            <person name="Fagiolini M."/>
            <person name="Faulkner G."/>
            <person name="Fletcher C.F."/>
            <person name="Fukushima T."/>
            <person name="Furuno M."/>
            <person name="Futaki S."/>
            <person name="Gariboldi M."/>
            <person name="Georgii-Hemming P."/>
            <person name="Gingeras T.R."/>
            <person name="Gojobori T."/>
            <person name="Green R.E."/>
            <person name="Gustincich S."/>
            <person name="Harbers M."/>
            <person name="Hayashi Y."/>
            <person name="Hensch T.K."/>
            <person name="Hirokawa N."/>
            <person name="Hill D."/>
            <person name="Huminiecki L."/>
            <person name="Iacono M."/>
            <person name="Ikeo K."/>
            <person name="Iwama A."/>
            <person name="Ishikawa T."/>
            <person name="Jakt M."/>
            <person name="Kanapin A."/>
            <person name="Katoh M."/>
            <person name="Kawasawa Y."/>
            <person name="Kelso J."/>
            <person name="Kitamura H."/>
            <person name="Kitano H."/>
            <person name="Kollias G."/>
            <person name="Krishnan S.P."/>
            <person name="Kruger A."/>
            <person name="Kummerfeld S.K."/>
            <person name="Kurochkin I.V."/>
            <person name="Lareau L.F."/>
            <person name="Lazarevic D."/>
            <person name="Lipovich L."/>
            <person name="Liu J."/>
            <person name="Liuni S."/>
            <person name="McWilliam S."/>
            <person name="Madan Babu M."/>
            <person name="Madera M."/>
            <person name="Marchionni L."/>
            <person name="Matsuda H."/>
            <person name="Matsuzawa S."/>
            <person name="Miki H."/>
            <person name="Mignone F."/>
            <person name="Miyake S."/>
            <person name="Morris K."/>
            <person name="Mottagui-Tabar S."/>
            <person name="Mulder N."/>
            <person name="Nakano N."/>
            <person name="Nakauchi H."/>
            <person name="Ng P."/>
            <person name="Nilsson R."/>
            <person name="Nishiguchi S."/>
            <person name="Nishikawa S."/>
            <person name="Nori F."/>
            <person name="Ohara O."/>
            <person name="Okazaki Y."/>
            <person name="Orlando V."/>
            <person name="Pang K.C."/>
            <person name="Pavan W.J."/>
            <person name="Pavesi G."/>
            <person name="Pesole G."/>
            <person name="Petrovsky N."/>
            <person name="Piazza S."/>
            <person name="Reed J."/>
            <person name="Reid J.F."/>
            <person name="Ring B.Z."/>
            <person name="Ringwald M."/>
            <person name="Rost B."/>
            <person name="Ruan Y."/>
            <person name="Salzberg S.L."/>
            <person name="Sandelin A."/>
            <person name="Schneider C."/>
            <person name="Schoenbach C."/>
            <person name="Sekiguchi K."/>
            <person name="Semple C.A."/>
            <person name="Seno S."/>
            <person name="Sessa L."/>
            <person name="Sheng Y."/>
            <person name="Shibata Y."/>
            <person name="Shimada H."/>
            <person name="Shimada K."/>
            <person name="Silva D."/>
            <person name="Sinclair B."/>
            <person name="Sperling S."/>
            <person name="Stupka E."/>
            <person name="Sugiura K."/>
            <person name="Sultana R."/>
            <person name="Takenaka Y."/>
            <person name="Taki K."/>
            <person name="Tammoja K."/>
            <person name="Tan S.L."/>
            <person name="Tang S."/>
            <person name="Taylor M.S."/>
            <person name="Tegner J."/>
            <person name="Teichmann S.A."/>
            <person name="Ueda H.R."/>
            <person name="van Nimwegen E."/>
            <person name="Verardo R."/>
            <person name="Wei C.L."/>
            <person name="Yagi K."/>
            <person name="Yamanishi H."/>
            <person name="Zabarovsky E."/>
            <person name="Zhu S."/>
            <person name="Zimmer A."/>
            <person name="Hide W."/>
            <person name="Bult C."/>
            <person name="Grimmond S.M."/>
            <person name="Teasdale R.D."/>
            <person name="Liu E.T."/>
            <person name="Brusic V."/>
            <person name="Quackenbush J."/>
            <person name="Wahlestedt C."/>
            <person name="Mattick J.S."/>
            <person name="Hume D.A."/>
            <person name="Kai C."/>
            <person name="Sasaki D."/>
            <person name="Tomaru Y."/>
            <person name="Fukuda S."/>
            <person name="Kanamori-Katayama M."/>
            <person name="Suzuki M."/>
            <person name="Aoki J."/>
            <person name="Arakawa T."/>
            <person name="Iida J."/>
            <person name="Imamura K."/>
            <person name="Itoh M."/>
            <person name="Kato T."/>
            <person name="Kawaji H."/>
            <person name="Kawagashira N."/>
            <person name="Kawashima T."/>
            <person name="Kojima M."/>
            <person name="Kondo S."/>
            <person name="Konno H."/>
            <person name="Nakano K."/>
            <person name="Ninomiya N."/>
            <person name="Nishio T."/>
            <person name="Okada M."/>
            <person name="Plessy C."/>
            <person name="Shibata K."/>
            <person name="Shiraki T."/>
            <person name="Suzuki S."/>
            <person name="Tagami M."/>
            <person name="Waki K."/>
            <person name="Watahiki A."/>
            <person name="Okamura-Oho Y."/>
            <person name="Suzuki H."/>
            <person name="Kawai J."/>
            <person name="Hayashizaki Y."/>
        </authorList>
    </citation>
    <scope>NUCLEOTIDE SEQUENCE [LARGE SCALE MRNA]</scope>
    <source>
        <strain>C57BL/6J</strain>
        <tissue>Bone marrow</tissue>
        <tissue>Embryo</tissue>
        <tissue>Kidney</tissue>
    </source>
</reference>
<reference key="2">
    <citation type="journal article" date="2004" name="Genome Res.">
        <title>The status, quality, and expansion of the NIH full-length cDNA project: the Mammalian Gene Collection (MGC).</title>
        <authorList>
            <consortium name="The MGC Project Team"/>
        </authorList>
    </citation>
    <scope>NUCLEOTIDE SEQUENCE [LARGE SCALE MRNA]</scope>
    <source>
        <strain>Czech II</strain>
        <tissue>Mammary tumor</tissue>
    </source>
</reference>
<reference key="3">
    <citation type="journal article" date="2010" name="Cell">
        <title>A tissue-specific atlas of mouse protein phosphorylation and expression.</title>
        <authorList>
            <person name="Huttlin E.L."/>
            <person name="Jedrychowski M.P."/>
            <person name="Elias J.E."/>
            <person name="Goswami T."/>
            <person name="Rad R."/>
            <person name="Beausoleil S.A."/>
            <person name="Villen J."/>
            <person name="Haas W."/>
            <person name="Sowa M.E."/>
            <person name="Gygi S.P."/>
        </authorList>
    </citation>
    <scope>IDENTIFICATION BY MASS SPECTROMETRY [LARGE SCALE ANALYSIS]</scope>
    <source>
        <tissue>Brain</tissue>
        <tissue>Brown adipose tissue</tissue>
        <tissue>Heart</tissue>
        <tissue>Kidney</tissue>
        <tissue>Liver</tissue>
        <tissue>Lung</tissue>
        <tissue>Pancreas</tissue>
        <tissue>Spleen</tissue>
        <tissue>Testis</tissue>
    </source>
</reference>
<reference key="4">
    <citation type="journal article" date="2012" name="Science">
        <title>Identification and functional expression of the mitochondrial pyruvate carrier.</title>
        <authorList>
            <person name="Herzig S."/>
            <person name="Raemy E."/>
            <person name="Montessuit S."/>
            <person name="Veuthey J.L."/>
            <person name="Zamboni N."/>
            <person name="Westermann B."/>
            <person name="Kunji E.R."/>
            <person name="Martinou J.C."/>
        </authorList>
    </citation>
    <scope>FUNCTION</scope>
    <scope>SUBCELLULAR LOCATION</scope>
    <scope>TRANSPORTER ACTIVITY</scope>
</reference>
<reference key="5">
    <citation type="journal article" date="2013" name="Proc. Natl. Acad. Sci. U.S.A.">
        <title>Label-free quantitative proteomics of the lysine acetylome in mitochondria identifies substrates of SIRT3 in metabolic pathways.</title>
        <authorList>
            <person name="Rardin M.J."/>
            <person name="Newman J.C."/>
            <person name="Held J.M."/>
            <person name="Cusack M.P."/>
            <person name="Sorensen D.J."/>
            <person name="Li B."/>
            <person name="Schilling B."/>
            <person name="Mooney S.D."/>
            <person name="Kahn C.R."/>
            <person name="Verdin E."/>
            <person name="Gibson B.W."/>
        </authorList>
    </citation>
    <scope>ACETYLATION [LARGE SCALE ANALYSIS] AT LYS-26</scope>
    <scope>IDENTIFICATION BY MASS SPECTROMETRY [LARGE SCALE ANALYSIS]</scope>
    <source>
        <tissue>Liver</tissue>
    </source>
</reference>
<name>MPC2_MOUSE</name>
<protein>
    <recommendedName>
        <fullName>Mitochondrial pyruvate carrier 2</fullName>
    </recommendedName>
    <alternativeName>
        <fullName>Brain protein 44</fullName>
    </alternativeName>
</protein>